<dbReference type="EC" id="3.2.1.113" evidence="4"/>
<dbReference type="EMBL" id="M63598">
    <property type="protein sequence ID" value="AAA34799.1"/>
    <property type="molecule type" value="Genomic_DNA"/>
</dbReference>
<dbReference type="EMBL" id="Z49631">
    <property type="protein sequence ID" value="CAA89662.1"/>
    <property type="molecule type" value="Genomic_DNA"/>
</dbReference>
<dbReference type="EMBL" id="BK006943">
    <property type="protein sequence ID" value="DAA08915.1"/>
    <property type="molecule type" value="Genomic_DNA"/>
</dbReference>
<dbReference type="PIR" id="A39345">
    <property type="entry name" value="A39345"/>
</dbReference>
<dbReference type="RefSeq" id="NP_012665.3">
    <property type="nucleotide sequence ID" value="NM_001181789.3"/>
</dbReference>
<dbReference type="PDB" id="1DL2">
    <property type="method" value="X-ray"/>
    <property type="resolution" value="1.54 A"/>
    <property type="chains" value="A=34-549"/>
</dbReference>
<dbReference type="PDB" id="1G6I">
    <property type="method" value="X-ray"/>
    <property type="resolution" value="1.59 A"/>
    <property type="chains" value="A=1-549"/>
</dbReference>
<dbReference type="PDBsum" id="1DL2"/>
<dbReference type="PDBsum" id="1G6I"/>
<dbReference type="SMR" id="P32906"/>
<dbReference type="BioGRID" id="33886">
    <property type="interactions" value="157"/>
</dbReference>
<dbReference type="DIP" id="DIP-1441N"/>
<dbReference type="FunCoup" id="P32906">
    <property type="interactions" value="1013"/>
</dbReference>
<dbReference type="IntAct" id="P32906">
    <property type="interactions" value="10"/>
</dbReference>
<dbReference type="MINT" id="P32906"/>
<dbReference type="STRING" id="4932.YJR131W"/>
<dbReference type="CAZy" id="GH47">
    <property type="family name" value="Glycoside Hydrolase Family 47"/>
</dbReference>
<dbReference type="GlyCosmos" id="P32906">
    <property type="glycosylation" value="3 sites, No reported glycans"/>
</dbReference>
<dbReference type="GlyGen" id="P32906">
    <property type="glycosylation" value="3 sites"/>
</dbReference>
<dbReference type="PaxDb" id="4932-YJR131W"/>
<dbReference type="PeptideAtlas" id="P32906"/>
<dbReference type="EnsemblFungi" id="YJR131W_mRNA">
    <property type="protein sequence ID" value="YJR131W"/>
    <property type="gene ID" value="YJR131W"/>
</dbReference>
<dbReference type="GeneID" id="853595"/>
<dbReference type="KEGG" id="sce:YJR131W"/>
<dbReference type="AGR" id="SGD:S000003892"/>
<dbReference type="SGD" id="S000003892">
    <property type="gene designation" value="MNS1"/>
</dbReference>
<dbReference type="VEuPathDB" id="FungiDB:YJR131W"/>
<dbReference type="eggNOG" id="KOG2431">
    <property type="taxonomic scope" value="Eukaryota"/>
</dbReference>
<dbReference type="GeneTree" id="ENSGT00940000155422"/>
<dbReference type="HOGENOM" id="CLU_003818_3_0_1"/>
<dbReference type="InParanoid" id="P32906"/>
<dbReference type="OMA" id="AAFKHSW"/>
<dbReference type="OrthoDB" id="8118055at2759"/>
<dbReference type="BioCyc" id="MetaCyc:YJR131W-MONOMER"/>
<dbReference type="BioCyc" id="YEAST:YJR131W-MONOMER"/>
<dbReference type="BRENDA" id="3.2.1.209">
    <property type="organism ID" value="984"/>
</dbReference>
<dbReference type="UniPathway" id="UPA00378"/>
<dbReference type="BioGRID-ORCS" id="853595">
    <property type="hits" value="0 hits in 10 CRISPR screens"/>
</dbReference>
<dbReference type="EvolutionaryTrace" id="P32906"/>
<dbReference type="PRO" id="PR:P32906"/>
<dbReference type="Proteomes" id="UP000002311">
    <property type="component" value="Chromosome X"/>
</dbReference>
<dbReference type="RNAct" id="P32906">
    <property type="molecule type" value="protein"/>
</dbReference>
<dbReference type="GO" id="GO:0005783">
    <property type="term" value="C:endoplasmic reticulum"/>
    <property type="evidence" value="ECO:0000314"/>
    <property type="project" value="SGD"/>
</dbReference>
<dbReference type="GO" id="GO:0005789">
    <property type="term" value="C:endoplasmic reticulum membrane"/>
    <property type="evidence" value="ECO:0007669"/>
    <property type="project" value="UniProtKB-SubCell"/>
</dbReference>
<dbReference type="GO" id="GO:0016020">
    <property type="term" value="C:membrane"/>
    <property type="evidence" value="ECO:0000318"/>
    <property type="project" value="GO_Central"/>
</dbReference>
<dbReference type="GO" id="GO:0005509">
    <property type="term" value="F:calcium ion binding"/>
    <property type="evidence" value="ECO:0000314"/>
    <property type="project" value="UniProtKB"/>
</dbReference>
<dbReference type="GO" id="GO:0004571">
    <property type="term" value="F:mannosyl-oligosaccharide 1,2-alpha-mannosidase activity"/>
    <property type="evidence" value="ECO:0000314"/>
    <property type="project" value="UniProtKB"/>
</dbReference>
<dbReference type="GO" id="GO:0005975">
    <property type="term" value="P:carbohydrate metabolic process"/>
    <property type="evidence" value="ECO:0007669"/>
    <property type="project" value="InterPro"/>
</dbReference>
<dbReference type="GO" id="GO:0036503">
    <property type="term" value="P:ERAD pathway"/>
    <property type="evidence" value="ECO:0000315"/>
    <property type="project" value="SGD"/>
</dbReference>
<dbReference type="GO" id="GO:0006486">
    <property type="term" value="P:protein glycosylation"/>
    <property type="evidence" value="ECO:0007669"/>
    <property type="project" value="UniProtKB-UniPathway"/>
</dbReference>
<dbReference type="FunFam" id="1.50.10.10:FF:000068">
    <property type="entry name" value="alpha-1,2-Mannosidase"/>
    <property type="match status" value="1"/>
</dbReference>
<dbReference type="Gene3D" id="1.50.10.10">
    <property type="match status" value="1"/>
</dbReference>
<dbReference type="InterPro" id="IPR012341">
    <property type="entry name" value="6hp_glycosidase-like_sf"/>
</dbReference>
<dbReference type="InterPro" id="IPR001382">
    <property type="entry name" value="Glyco_hydro_47"/>
</dbReference>
<dbReference type="InterPro" id="IPR050749">
    <property type="entry name" value="Glycosyl_Hydrolase_47"/>
</dbReference>
<dbReference type="InterPro" id="IPR036026">
    <property type="entry name" value="Seven-hairpin_glycosidases"/>
</dbReference>
<dbReference type="PANTHER" id="PTHR11742:SF55">
    <property type="entry name" value="ENDOPLASMIC RETICULUM MANNOSYL-OLIGOSACCHARIDE 1,2-ALPHA-MANNOSIDASE"/>
    <property type="match status" value="1"/>
</dbReference>
<dbReference type="PANTHER" id="PTHR11742">
    <property type="entry name" value="MANNOSYL-OLIGOSACCHARIDE ALPHA-1,2-MANNOSIDASE-RELATED"/>
    <property type="match status" value="1"/>
</dbReference>
<dbReference type="Pfam" id="PF01532">
    <property type="entry name" value="Glyco_hydro_47"/>
    <property type="match status" value="1"/>
</dbReference>
<dbReference type="PRINTS" id="PR00747">
    <property type="entry name" value="GLYHDRLASE47"/>
</dbReference>
<dbReference type="SUPFAM" id="SSF48225">
    <property type="entry name" value="Seven-hairpin glycosidases"/>
    <property type="match status" value="1"/>
</dbReference>
<protein>
    <recommendedName>
        <fullName>Endoplasmic reticulum mannosyl-oligosaccharide 1,2-alpha-mannosidase</fullName>
        <ecNumber evidence="4">3.2.1.113</ecNumber>
    </recommendedName>
    <alternativeName>
        <fullName>ER alpha-1,2-mannosidase</fullName>
    </alternativeName>
    <alternativeName>
        <fullName>Man(9)-alpha-mannosidase</fullName>
    </alternativeName>
</protein>
<sequence length="549" mass="63057">MKNSVGISIATIVAIIAAIYYVPWYEHFERKSPGAGEMRDRIESMFLESWRDYSKHGWGYDVYGPIEHTSHNMPRGNQPLGWIIVDSVDTLMLMYNSSTLYKSEFEAEIQRSEHWINDVLDFDIDAEVNVFETTIRMLGGLLSAYHLSDVLEVGNKTVYLNKAIDLGDRLALAFLSTQTGIPYSSINLHSGQAVKNHADGGASSTAEFTTLQMEFKYLAYLTGNRTYWELVERVYEPLYKNNDLLNTYDGLVPIYTFPDTGKFGASTIRFGSRGDSFYEYLLKQYLLTHETLYYDLYRKSMEGMKKHLLAQSKPSSLWYIGEREQGLHGQLSPKMDHLVCFMGGLLASGSTEGLSIHEARRRPFFSLSLERKSDWDLAKGITDTCYQMYKQSSSGLAPEIVVFNDGNIKQDGWWRSSVGDFFVKPLDRHNLQRPETVESIMFMYHLSHDHKYREWGAEIATSFFENTCVDCNDPKLRRFTSLSDCITLPTKKSNNMESFWLAETLKYLYILFLDEFDLTKVVFNTEAHPFPVLDEEILKSQSLTTGWSL</sequence>
<organism>
    <name type="scientific">Saccharomyces cerevisiae (strain ATCC 204508 / S288c)</name>
    <name type="common">Baker's yeast</name>
    <dbReference type="NCBI Taxonomy" id="559292"/>
    <lineage>
        <taxon>Eukaryota</taxon>
        <taxon>Fungi</taxon>
        <taxon>Dikarya</taxon>
        <taxon>Ascomycota</taxon>
        <taxon>Saccharomycotina</taxon>
        <taxon>Saccharomycetes</taxon>
        <taxon>Saccharomycetales</taxon>
        <taxon>Saccharomycetaceae</taxon>
        <taxon>Saccharomyces</taxon>
    </lineage>
</organism>
<evidence type="ECO:0000250" key="1">
    <source>
        <dbReference type="UniProtKB" id="P31723"/>
    </source>
</evidence>
<evidence type="ECO:0000255" key="2"/>
<evidence type="ECO:0000269" key="3">
    <source>
    </source>
</evidence>
<evidence type="ECO:0000269" key="4">
    <source>
    </source>
</evidence>
<evidence type="ECO:0000269" key="5">
    <source>
    </source>
</evidence>
<evidence type="ECO:0000269" key="6">
    <source>
    </source>
</evidence>
<evidence type="ECO:0000269" key="7">
    <source ref="7"/>
</evidence>
<evidence type="ECO:0000305" key="8"/>
<evidence type="ECO:0000305" key="9">
    <source>
    </source>
</evidence>
<evidence type="ECO:0007744" key="10">
    <source>
        <dbReference type="PDB" id="1DL2"/>
    </source>
</evidence>
<evidence type="ECO:0007744" key="11">
    <source>
        <dbReference type="PDB" id="1G6I"/>
    </source>
</evidence>
<evidence type="ECO:0007829" key="12">
    <source>
        <dbReference type="PDB" id="1DL2"/>
    </source>
</evidence>
<evidence type="ECO:0007829" key="13">
    <source>
        <dbReference type="PDB" id="1G6I"/>
    </source>
</evidence>
<feature type="chain" id="PRO_0000210319" description="Endoplasmic reticulum mannosyl-oligosaccharide 1,2-alpha-mannosidase">
    <location>
        <begin position="1"/>
        <end position="549"/>
    </location>
</feature>
<feature type="topological domain" description="Cytoplasmic" evidence="2">
    <location>
        <begin position="1"/>
        <end position="4"/>
    </location>
</feature>
<feature type="transmembrane region" description="Helical; Signal-anchor for type II membrane protein" evidence="2">
    <location>
        <begin position="5"/>
        <end position="24"/>
    </location>
</feature>
<feature type="topological domain" description="Lumenal" evidence="2">
    <location>
        <begin position="25"/>
        <end position="354"/>
    </location>
</feature>
<feature type="active site" description="Proton donor" evidence="1">
    <location>
        <position position="399"/>
    </location>
</feature>
<feature type="binding site" evidence="3">
    <location>
        <position position="525"/>
    </location>
    <ligand>
        <name>Ca(2+)</name>
        <dbReference type="ChEBI" id="CHEBI:29108"/>
    </ligand>
</feature>
<feature type="glycosylation site" description="N-linked (GlcNAc...) asparagine" evidence="7 11">
    <location>
        <position position="96"/>
    </location>
</feature>
<feature type="glycosylation site" description="N-linked (GlcNAc...) asparagine" evidence="7 11">
    <location>
        <position position="155"/>
    </location>
</feature>
<feature type="glycosylation site" description="N-linked (GlcNAc...) asparagine" evidence="7 11">
    <location>
        <position position="224"/>
    </location>
</feature>
<feature type="disulfide bond" evidence="3 10 11">
    <location>
        <begin position="340"/>
        <end position="385"/>
    </location>
</feature>
<feature type="disulfide bond" evidence="3 10 11">
    <location>
        <begin position="468"/>
        <end position="471"/>
    </location>
</feature>
<feature type="sequence variant">
    <original>D</original>
    <variation>Y</variation>
    <location>
        <position position="40"/>
    </location>
</feature>
<feature type="sequence variant">
    <original>D</original>
    <variation>L</variation>
    <location>
        <position position="376"/>
    </location>
</feature>
<feature type="helix" evidence="12">
    <location>
        <begin position="35"/>
        <end position="56"/>
    </location>
</feature>
<feature type="strand" evidence="12">
    <location>
        <begin position="61"/>
        <end position="64"/>
    </location>
</feature>
<feature type="turn" evidence="12">
    <location>
        <begin position="65"/>
        <end position="68"/>
    </location>
</feature>
<feature type="strand" evidence="12">
    <location>
        <begin position="69"/>
        <end position="71"/>
    </location>
</feature>
<feature type="helix" evidence="12">
    <location>
        <begin position="84"/>
        <end position="97"/>
    </location>
</feature>
<feature type="strand" evidence="12">
    <location>
        <begin position="99"/>
        <end position="101"/>
    </location>
</feature>
<feature type="helix" evidence="12">
    <location>
        <begin position="102"/>
        <end position="118"/>
    </location>
</feature>
<feature type="strand" evidence="12">
    <location>
        <begin position="125"/>
        <end position="129"/>
    </location>
</feature>
<feature type="helix" evidence="12">
    <location>
        <begin position="130"/>
        <end position="151"/>
    </location>
</feature>
<feature type="helix" evidence="12">
    <location>
        <begin position="156"/>
        <end position="171"/>
    </location>
</feature>
<feature type="helix" evidence="12">
    <location>
        <begin position="172"/>
        <end position="175"/>
    </location>
</feature>
<feature type="strand" evidence="12">
    <location>
        <begin position="176"/>
        <end position="180"/>
    </location>
</feature>
<feature type="strand" evidence="12">
    <location>
        <begin position="184"/>
        <end position="187"/>
    </location>
</feature>
<feature type="turn" evidence="12">
    <location>
        <begin position="188"/>
        <end position="190"/>
    </location>
</feature>
<feature type="helix" evidence="12">
    <location>
        <begin position="199"/>
        <end position="201"/>
    </location>
</feature>
<feature type="helix" evidence="12">
    <location>
        <begin position="205"/>
        <end position="208"/>
    </location>
</feature>
<feature type="helix" evidence="12">
    <location>
        <begin position="212"/>
        <end position="222"/>
    </location>
</feature>
<feature type="helix" evidence="12">
    <location>
        <begin position="225"/>
        <end position="232"/>
    </location>
</feature>
<feature type="helix" evidence="12">
    <location>
        <begin position="235"/>
        <end position="242"/>
    </location>
</feature>
<feature type="helix" evidence="12">
    <location>
        <begin position="244"/>
        <end position="248"/>
    </location>
</feature>
<feature type="strand" evidence="12">
    <location>
        <begin position="253"/>
        <end position="256"/>
    </location>
</feature>
<feature type="turn" evidence="12">
    <location>
        <begin position="258"/>
        <end position="260"/>
    </location>
</feature>
<feature type="turn" evidence="12">
    <location>
        <begin position="272"/>
        <end position="274"/>
    </location>
</feature>
<feature type="helix" evidence="12">
    <location>
        <begin position="275"/>
        <end position="288"/>
    </location>
</feature>
<feature type="helix" evidence="12">
    <location>
        <begin position="291"/>
        <end position="307"/>
    </location>
</feature>
<feature type="strand" evidence="12">
    <location>
        <begin position="309"/>
        <end position="311"/>
    </location>
</feature>
<feature type="turn" evidence="12">
    <location>
        <begin position="313"/>
        <end position="315"/>
    </location>
</feature>
<feature type="strand" evidence="12">
    <location>
        <begin position="318"/>
        <end position="320"/>
    </location>
</feature>
<feature type="turn" evidence="13">
    <location>
        <begin position="324"/>
        <end position="328"/>
    </location>
</feature>
<feature type="strand" evidence="12">
    <location>
        <begin position="334"/>
        <end position="336"/>
    </location>
</feature>
<feature type="helix" evidence="12">
    <location>
        <begin position="337"/>
        <end position="341"/>
    </location>
</feature>
<feature type="helix" evidence="12">
    <location>
        <begin position="342"/>
        <end position="351"/>
    </location>
</feature>
<feature type="helix" evidence="12">
    <location>
        <begin position="356"/>
        <end position="359"/>
    </location>
</feature>
<feature type="helix" evidence="12">
    <location>
        <begin position="372"/>
        <end position="390"/>
    </location>
</feature>
<feature type="strand" evidence="12">
    <location>
        <begin position="399"/>
        <end position="403"/>
    </location>
</feature>
<feature type="strand" evidence="12">
    <location>
        <begin position="417"/>
        <end position="423"/>
    </location>
</feature>
<feature type="helix" evidence="12">
    <location>
        <begin position="425"/>
        <end position="427"/>
    </location>
</feature>
<feature type="helix" evidence="12">
    <location>
        <begin position="435"/>
        <end position="447"/>
    </location>
</feature>
<feature type="helix" evidence="12">
    <location>
        <begin position="451"/>
        <end position="467"/>
    </location>
</feature>
<feature type="strand" evidence="12">
    <location>
        <begin position="468"/>
        <end position="470"/>
    </location>
</feature>
<feature type="turn" evidence="12">
    <location>
        <begin position="474"/>
        <end position="476"/>
    </location>
</feature>
<feature type="strand" evidence="12">
    <location>
        <begin position="482"/>
        <end position="489"/>
    </location>
</feature>
<feature type="helix" evidence="12">
    <location>
        <begin position="498"/>
        <end position="502"/>
    </location>
</feature>
<feature type="helix" evidence="12">
    <location>
        <begin position="504"/>
        <end position="511"/>
    </location>
</feature>
<feature type="strand" evidence="12">
    <location>
        <begin position="520"/>
        <end position="523"/>
    </location>
</feature>
<feature type="strand" evidence="12">
    <location>
        <begin position="529"/>
        <end position="531"/>
    </location>
</feature>
<feature type="helix" evidence="12">
    <location>
        <begin position="535"/>
        <end position="540"/>
    </location>
</feature>
<name>MNS1_YEAST</name>
<keyword id="KW-0002">3D-structure</keyword>
<keyword id="KW-0106">Calcium</keyword>
<keyword id="KW-0903">Direct protein sequencing</keyword>
<keyword id="KW-1015">Disulfide bond</keyword>
<keyword id="KW-0256">Endoplasmic reticulum</keyword>
<keyword id="KW-0325">Glycoprotein</keyword>
<keyword id="KW-0326">Glycosidase</keyword>
<keyword id="KW-0378">Hydrolase</keyword>
<keyword id="KW-0472">Membrane</keyword>
<keyword id="KW-0479">Metal-binding</keyword>
<keyword id="KW-1185">Reference proteome</keyword>
<keyword id="KW-0735">Signal-anchor</keyword>
<keyword id="KW-0812">Transmembrane</keyword>
<keyword id="KW-1133">Transmembrane helix</keyword>
<reference key="1">
    <citation type="journal article" date="1991" name="J. Biol. Chem.">
        <title>Glycoprotein biosynthesis in Saccharomyces cerevisiae. Isolation and characterization of the gene encoding a specific processing alpha-mannosidase.</title>
        <authorList>
            <person name="Camirand A."/>
            <person name="Heysen A."/>
            <person name="Grondin B."/>
            <person name="Herscovics A."/>
        </authorList>
    </citation>
    <scope>NUCLEOTIDE SEQUENCE [GENOMIC DNA]</scope>
    <scope>PROTEIN SEQUENCE OF 29-51; 226-233; 241-259; 314-323 AND 369-383</scope>
    <scope>DISRUPTION PHENOTYPE</scope>
</reference>
<reference key="2">
    <citation type="journal article" date="1996" name="EMBO J.">
        <title>Complete nucleotide sequence of Saccharomyces cerevisiae chromosome X.</title>
        <authorList>
            <person name="Galibert F."/>
            <person name="Alexandraki D."/>
            <person name="Baur A."/>
            <person name="Boles E."/>
            <person name="Chalwatzis N."/>
            <person name="Chuat J.-C."/>
            <person name="Coster F."/>
            <person name="Cziepluch C."/>
            <person name="de Haan M."/>
            <person name="Domdey H."/>
            <person name="Durand P."/>
            <person name="Entian K.-D."/>
            <person name="Gatius M."/>
            <person name="Goffeau A."/>
            <person name="Grivell L.A."/>
            <person name="Hennemann A."/>
            <person name="Herbert C.J."/>
            <person name="Heumann K."/>
            <person name="Hilger F."/>
            <person name="Hollenberg C.P."/>
            <person name="Huang M.-E."/>
            <person name="Jacq C."/>
            <person name="Jauniaux J.-C."/>
            <person name="Katsoulou C."/>
            <person name="Kirchrath L."/>
            <person name="Kleine K."/>
            <person name="Kordes E."/>
            <person name="Koetter P."/>
            <person name="Liebl S."/>
            <person name="Louis E.J."/>
            <person name="Manus V."/>
            <person name="Mewes H.-W."/>
            <person name="Miosga T."/>
            <person name="Obermaier B."/>
            <person name="Perea J."/>
            <person name="Pohl T.M."/>
            <person name="Portetelle D."/>
            <person name="Pujol A."/>
            <person name="Purnelle B."/>
            <person name="Ramezani Rad M."/>
            <person name="Rasmussen S.W."/>
            <person name="Rose M."/>
            <person name="Rossau R."/>
            <person name="Schaaff-Gerstenschlaeger I."/>
            <person name="Smits P.H.M."/>
            <person name="Scarcez T."/>
            <person name="Soriano N."/>
            <person name="To Van D."/>
            <person name="Tzermia M."/>
            <person name="Van Broekhoven A."/>
            <person name="Vandenbol M."/>
            <person name="Wedler H."/>
            <person name="von Wettstein D."/>
            <person name="Wambutt R."/>
            <person name="Zagulski M."/>
            <person name="Zollner A."/>
            <person name="Karpfinger-Hartl L."/>
        </authorList>
    </citation>
    <scope>NUCLEOTIDE SEQUENCE [LARGE SCALE GENOMIC DNA]</scope>
    <source>
        <strain>ATCC 204508 / S288c</strain>
    </source>
</reference>
<reference key="3">
    <citation type="journal article" date="2014" name="G3 (Bethesda)">
        <title>The reference genome sequence of Saccharomyces cerevisiae: Then and now.</title>
        <authorList>
            <person name="Engel S.R."/>
            <person name="Dietrich F.S."/>
            <person name="Fisk D.G."/>
            <person name="Binkley G."/>
            <person name="Balakrishnan R."/>
            <person name="Costanzo M.C."/>
            <person name="Dwight S.S."/>
            <person name="Hitz B.C."/>
            <person name="Karra K."/>
            <person name="Nash R.S."/>
            <person name="Weng S."/>
            <person name="Wong E.D."/>
            <person name="Lloyd P."/>
            <person name="Skrzypek M.S."/>
            <person name="Miyasato S.R."/>
            <person name="Simison M."/>
            <person name="Cherry J.M."/>
        </authorList>
    </citation>
    <scope>GENOME REANNOTATION</scope>
    <source>
        <strain>ATCC 204508 / S288c</strain>
    </source>
</reference>
<reference key="4">
    <citation type="journal article" date="2002" name="Glycobiology">
        <title>The specificity of the yeast and human class I ER alpha 1,2-mannosidases involved in ER quality control is not as strict previously reported.</title>
        <authorList>
            <person name="Herscovics A."/>
            <person name="Romero P.A."/>
            <person name="Tremblay L.O."/>
        </authorList>
    </citation>
    <scope>FUNCTION</scope>
    <scope>CATALYTIC ACTIVITY</scope>
    <scope>SUBSTRATE SPECIFICITY</scope>
    <scope>PATHWAY</scope>
</reference>
<reference key="5">
    <citation type="journal article" date="2003" name="Nature">
        <title>Global analysis of protein expression in yeast.</title>
        <authorList>
            <person name="Ghaemmaghami S."/>
            <person name="Huh W.-K."/>
            <person name="Bower K."/>
            <person name="Howson R.W."/>
            <person name="Belle A."/>
            <person name="Dephoure N."/>
            <person name="O'Shea E.K."/>
            <person name="Weissman J.S."/>
        </authorList>
    </citation>
    <scope>LEVEL OF PROTEIN EXPRESSION [LARGE SCALE ANALYSIS]</scope>
</reference>
<reference key="6">
    <citation type="journal article" date="2000" name="EMBO J.">
        <title>Crystal structure of a class I alpha1,2-mannosidase involved in N-glycan processing and endoplasmic reticulum quality control.</title>
        <authorList>
            <person name="Vallee F."/>
            <person name="Lipari F."/>
            <person name="Yip P."/>
            <person name="Sleno B."/>
            <person name="Herscovics A."/>
            <person name="Howell P.L."/>
        </authorList>
    </citation>
    <scope>X-RAY CRYSTALLOGRAPHY (1.54 ANGSTROMS) OF 34-549</scope>
    <scope>DISULFIDE BONDS</scope>
    <scope>CALCIUM-BINDING</scope>
    <scope>COFACTOR</scope>
    <scope>SUBUNIT</scope>
</reference>
<reference evidence="11" key="7">
    <citation type="submission" date="2000-11" db="PDB data bank">
        <title>Structure and function of Class I a1,2-mannosidases involved in glycoprotein biosynthesis.</title>
        <authorList>
            <person name="Herscovics A."/>
            <person name="Lipari F."/>
            <person name="Sleno B."/>
            <person name="Romera P.A."/>
            <person name="Vallee F."/>
            <person name="Yip P."/>
            <person name="Howell P.A."/>
        </authorList>
    </citation>
    <scope>X-RAY CRYSTALLOGRAPHY (1.59 ANGSTROMS) IN COMPLEX WITH MANNOSE</scope>
    <scope>GLYCOSYLATION AT ASN-96; ASN-155 AND ASN-224</scope>
</reference>
<proteinExistence type="evidence at protein level"/>
<accession>P32906</accession>
<accession>D6VWU9</accession>
<gene>
    <name type="primary">MNS1</name>
    <name type="ordered locus">YJR131W</name>
    <name type="ORF">J2110</name>
</gene>
<comment type="function">
    <text evidence="4">Involved in glycoprotein quality control as it is important for the targeting of misfolded glycoproteins for degradation. It primarily trims a single alpha-1,2-linked mannose residue from Man(9)GlcNAc(2) to produce Man(8)GlcNAc(2), but at high enzyme concentrations it further trims the carbohydrates to Man(5)GlcNAc(2).</text>
</comment>
<comment type="catalytic activity">
    <reaction evidence="4">
        <text>N(4)-(alpha-D-Man-(1-&gt;2)-alpha-D-Man-(1-&gt;2)-alpha-D-Man-(1-&gt;3)-[alpha-D-Man-(1-&gt;2)-alpha-D-Man-(1-&gt;3)-[alpha-D-Man-(1-&gt;2)-alpha-D-Man-(1-&gt;6)]-alpha-D-Man-(1-&gt;6)]-beta-D-Man-(1-&gt;4)-beta-D-GlcNAc-(1-&gt;4)-beta-D-GlcNAc)-L-asparaginyl-[protein] (N-glucan mannose isomer 9A1,2,3B1,2,3) + 4 H2O = N(4)-(alpha-D-Man-(1-&gt;3)-[alpha-D-Man-(1-&gt;3)-[alpha-D-Man-(1-&gt;6)]-alpha-D-Man-(1-&gt;6)]-beta-D-Man-(1-&gt;4)-beta-D-GlcNAc-(1-&gt;4)-beta-D-GlcNAc)-L-asparaginyl-[protein] (N-glucan mannose isomer 5A1,2) + 4 beta-D-mannose</text>
        <dbReference type="Rhea" id="RHEA:56008"/>
        <dbReference type="Rhea" id="RHEA-COMP:14356"/>
        <dbReference type="Rhea" id="RHEA-COMP:14367"/>
        <dbReference type="ChEBI" id="CHEBI:15377"/>
        <dbReference type="ChEBI" id="CHEBI:28563"/>
        <dbReference type="ChEBI" id="CHEBI:59087"/>
        <dbReference type="ChEBI" id="CHEBI:139493"/>
        <dbReference type="EC" id="3.2.1.113"/>
    </reaction>
</comment>
<comment type="catalytic activity">
    <reaction evidence="4">
        <text>N(4)-(alpha-D-Man-(1-&gt;2)-alpha-D-Man-(1-&gt;2)-alpha-D-Man-(1-&gt;3)-[alpha-D-Man-(1-&gt;3)-[alpha-D-Man-(1-&gt;2)-alpha-D-Man-(1-&gt;6)]-alpha-D-Man-(1-&gt;6)]-beta-D-Man-(1-&gt;4)-beta-D-GlcNAc-(1-&gt;4)-beta-D-GlcNAc)-L-asparaginyl-[protein] (N-glucan mannose isomer 8A1,2,3B1,3) + 3 H2O = N(4)-(alpha-D-Man-(1-&gt;3)-[alpha-D-Man-(1-&gt;3)-[alpha-D-Man-(1-&gt;6)]-alpha-D-Man-(1-&gt;6)]-beta-D-Man-(1-&gt;4)-beta-D-GlcNAc-(1-&gt;4)-beta-D-GlcNAc)-L-asparaginyl-[protein] (N-glucan mannose isomer 5A1,2) + 3 beta-D-mannose</text>
        <dbReference type="Rhea" id="RHEA:56028"/>
        <dbReference type="Rhea" id="RHEA-COMP:14358"/>
        <dbReference type="Rhea" id="RHEA-COMP:14367"/>
        <dbReference type="ChEBI" id="CHEBI:15377"/>
        <dbReference type="ChEBI" id="CHEBI:28563"/>
        <dbReference type="ChEBI" id="CHEBI:59087"/>
        <dbReference type="ChEBI" id="CHEBI:60628"/>
        <dbReference type="EC" id="3.2.1.113"/>
    </reaction>
</comment>
<comment type="cofactor">
    <cofactor evidence="9">
        <name>Ca(2+)</name>
        <dbReference type="ChEBI" id="CHEBI:29108"/>
    </cofactor>
</comment>
<comment type="pathway">
    <text evidence="4">Protein modification; protein glycosylation.</text>
</comment>
<comment type="subunit">
    <text evidence="3">Homodimer.</text>
</comment>
<comment type="subcellular location">
    <subcellularLocation>
        <location>Endoplasmic reticulum membrane</location>
        <topology>Single-pass type II membrane protein</topology>
    </subcellularLocation>
</comment>
<comment type="disruption phenotype">
    <text evidence="6">No visible phenotype.</text>
</comment>
<comment type="miscellaneous">
    <text evidence="5">Present with 8260 molecules/cell in log phase SD medium.</text>
</comment>
<comment type="similarity">
    <text evidence="8">Belongs to the glycosyl hydrolase 47 family.</text>
</comment>